<gene>
    <name evidence="1" type="primary">iscA</name>
    <name type="ordered locus">PC1_3029</name>
</gene>
<accession>C6DBI9</accession>
<dbReference type="EMBL" id="CP001657">
    <property type="protein sequence ID" value="ACT14052.1"/>
    <property type="molecule type" value="Genomic_DNA"/>
</dbReference>
<dbReference type="RefSeq" id="WP_015841204.1">
    <property type="nucleotide sequence ID" value="NC_012917.1"/>
</dbReference>
<dbReference type="SMR" id="C6DBI9"/>
<dbReference type="STRING" id="561230.PC1_3029"/>
<dbReference type="KEGG" id="pct:PC1_3029"/>
<dbReference type="eggNOG" id="COG0316">
    <property type="taxonomic scope" value="Bacteria"/>
</dbReference>
<dbReference type="HOGENOM" id="CLU_069054_5_1_6"/>
<dbReference type="OrthoDB" id="9801228at2"/>
<dbReference type="Proteomes" id="UP000002736">
    <property type="component" value="Chromosome"/>
</dbReference>
<dbReference type="GO" id="GO:0005829">
    <property type="term" value="C:cytosol"/>
    <property type="evidence" value="ECO:0007669"/>
    <property type="project" value="TreeGrafter"/>
</dbReference>
<dbReference type="GO" id="GO:0051537">
    <property type="term" value="F:2 iron, 2 sulfur cluster binding"/>
    <property type="evidence" value="ECO:0007669"/>
    <property type="project" value="TreeGrafter"/>
</dbReference>
<dbReference type="GO" id="GO:0005506">
    <property type="term" value="F:iron ion binding"/>
    <property type="evidence" value="ECO:0007669"/>
    <property type="project" value="UniProtKB-UniRule"/>
</dbReference>
<dbReference type="GO" id="GO:0016226">
    <property type="term" value="P:iron-sulfur cluster assembly"/>
    <property type="evidence" value="ECO:0007669"/>
    <property type="project" value="UniProtKB-UniRule"/>
</dbReference>
<dbReference type="FunFam" id="2.60.300.12:FF:000001">
    <property type="entry name" value="Iron-binding protein IscA"/>
    <property type="match status" value="1"/>
</dbReference>
<dbReference type="Gene3D" id="2.60.300.12">
    <property type="entry name" value="HesB-like domain"/>
    <property type="match status" value="1"/>
</dbReference>
<dbReference type="HAMAP" id="MF_01429">
    <property type="entry name" value="Fe_S_insert_IscA"/>
    <property type="match status" value="1"/>
</dbReference>
<dbReference type="InterPro" id="IPR050322">
    <property type="entry name" value="Fe-S_cluster_asmbl/transfer"/>
</dbReference>
<dbReference type="InterPro" id="IPR000361">
    <property type="entry name" value="FeS_biogenesis"/>
</dbReference>
<dbReference type="InterPro" id="IPR016092">
    <property type="entry name" value="FeS_cluster_insertion"/>
</dbReference>
<dbReference type="InterPro" id="IPR017870">
    <property type="entry name" value="FeS_cluster_insertion_CS"/>
</dbReference>
<dbReference type="InterPro" id="IPR035903">
    <property type="entry name" value="HesB-like_dom_sf"/>
</dbReference>
<dbReference type="InterPro" id="IPR011302">
    <property type="entry name" value="IscA_proteobacteria"/>
</dbReference>
<dbReference type="NCBIfam" id="TIGR00049">
    <property type="entry name" value="iron-sulfur cluster assembly accessory protein"/>
    <property type="match status" value="1"/>
</dbReference>
<dbReference type="NCBIfam" id="TIGR02011">
    <property type="entry name" value="IscA"/>
    <property type="match status" value="1"/>
</dbReference>
<dbReference type="NCBIfam" id="NF007049">
    <property type="entry name" value="PRK09502.1"/>
    <property type="match status" value="1"/>
</dbReference>
<dbReference type="PANTHER" id="PTHR10072:SF41">
    <property type="entry name" value="IRON-SULFUR CLUSTER ASSEMBLY 1 HOMOLOG, MITOCHONDRIAL"/>
    <property type="match status" value="1"/>
</dbReference>
<dbReference type="PANTHER" id="PTHR10072">
    <property type="entry name" value="IRON-SULFUR CLUSTER ASSEMBLY PROTEIN"/>
    <property type="match status" value="1"/>
</dbReference>
<dbReference type="Pfam" id="PF01521">
    <property type="entry name" value="Fe-S_biosyn"/>
    <property type="match status" value="1"/>
</dbReference>
<dbReference type="SUPFAM" id="SSF89360">
    <property type="entry name" value="HesB-like domain"/>
    <property type="match status" value="1"/>
</dbReference>
<dbReference type="PROSITE" id="PS01152">
    <property type="entry name" value="HESB"/>
    <property type="match status" value="1"/>
</dbReference>
<sequence>MSISLSESAAQRVSAFIANRGKGLGLRLGVRTSGCSGMAYVLEFVDDLNDGDTVFEDKGIKVIVDGKSLVYLDGTELDFVKEGLNEGFKFNNPNSSGECGCGESFNV</sequence>
<keyword id="KW-0408">Iron</keyword>
<keyword id="KW-0479">Metal-binding</keyword>
<comment type="function">
    <text evidence="1">Is able to transfer iron-sulfur clusters to apo-ferredoxin. Multiple cycles of [2Fe2S] cluster formation and transfer are observed, suggesting that IscA acts catalytically. Recruits intracellular free iron so as to provide iron for the assembly of transient iron-sulfur cluster in IscU in the presence of IscS, L-cysteine and the thioredoxin reductase system TrxA/TrxB.</text>
</comment>
<comment type="cofactor">
    <cofactor evidence="1">
        <name>Fe cation</name>
        <dbReference type="ChEBI" id="CHEBI:24875"/>
    </cofactor>
    <text evidence="1">Binds 2 iron ions per dimer. The dimer may bind additional iron ions.</text>
</comment>
<comment type="subunit">
    <text evidence="1">Homodimer; may form tetramers and higher multimers.</text>
</comment>
<comment type="similarity">
    <text evidence="1">Belongs to the HesB/IscA family.</text>
</comment>
<proteinExistence type="inferred from homology"/>
<protein>
    <recommendedName>
        <fullName evidence="1">Iron-binding protein IscA</fullName>
    </recommendedName>
    <alternativeName>
        <fullName evidence="1">Iron-sulfur cluster assembly protein</fullName>
    </alternativeName>
</protein>
<reference key="1">
    <citation type="submission" date="2009-07" db="EMBL/GenBank/DDBJ databases">
        <title>Complete sequence of Pectobacterium carotovorum subsp. carotovorum PC1.</title>
        <authorList>
            <consortium name="US DOE Joint Genome Institute"/>
            <person name="Lucas S."/>
            <person name="Copeland A."/>
            <person name="Lapidus A."/>
            <person name="Glavina del Rio T."/>
            <person name="Tice H."/>
            <person name="Bruce D."/>
            <person name="Goodwin L."/>
            <person name="Pitluck S."/>
            <person name="Munk A.C."/>
            <person name="Brettin T."/>
            <person name="Detter J.C."/>
            <person name="Han C."/>
            <person name="Tapia R."/>
            <person name="Larimer F."/>
            <person name="Land M."/>
            <person name="Hauser L."/>
            <person name="Kyrpides N."/>
            <person name="Mikhailova N."/>
            <person name="Balakrishnan V."/>
            <person name="Glasner J."/>
            <person name="Perna N.T."/>
        </authorList>
    </citation>
    <scope>NUCLEOTIDE SEQUENCE [LARGE SCALE GENOMIC DNA]</scope>
    <source>
        <strain>PC1</strain>
    </source>
</reference>
<name>ISCA_PECCP</name>
<feature type="chain" id="PRO_1000215273" description="Iron-binding protein IscA">
    <location>
        <begin position="1"/>
        <end position="107"/>
    </location>
</feature>
<feature type="binding site" evidence="1">
    <location>
        <position position="35"/>
    </location>
    <ligand>
        <name>Fe cation</name>
        <dbReference type="ChEBI" id="CHEBI:24875"/>
    </ligand>
</feature>
<feature type="binding site" evidence="1">
    <location>
        <position position="99"/>
    </location>
    <ligand>
        <name>Fe cation</name>
        <dbReference type="ChEBI" id="CHEBI:24875"/>
    </ligand>
</feature>
<feature type="binding site" evidence="1">
    <location>
        <position position="101"/>
    </location>
    <ligand>
        <name>Fe cation</name>
        <dbReference type="ChEBI" id="CHEBI:24875"/>
    </ligand>
</feature>
<evidence type="ECO:0000255" key="1">
    <source>
        <dbReference type="HAMAP-Rule" id="MF_01429"/>
    </source>
</evidence>
<organism>
    <name type="scientific">Pectobacterium carotovorum subsp. carotovorum (strain PC1)</name>
    <dbReference type="NCBI Taxonomy" id="561230"/>
    <lineage>
        <taxon>Bacteria</taxon>
        <taxon>Pseudomonadati</taxon>
        <taxon>Pseudomonadota</taxon>
        <taxon>Gammaproteobacteria</taxon>
        <taxon>Enterobacterales</taxon>
        <taxon>Pectobacteriaceae</taxon>
        <taxon>Pectobacterium</taxon>
    </lineage>
</organism>